<reference key="1">
    <citation type="journal article" date="2000" name="Nature">
        <title>DNA sequence of both chromosomes of the cholera pathogen Vibrio cholerae.</title>
        <authorList>
            <person name="Heidelberg J.F."/>
            <person name="Eisen J.A."/>
            <person name="Nelson W.C."/>
            <person name="Clayton R.A."/>
            <person name="Gwinn M.L."/>
            <person name="Dodson R.J."/>
            <person name="Haft D.H."/>
            <person name="Hickey E.K."/>
            <person name="Peterson J.D."/>
            <person name="Umayam L.A."/>
            <person name="Gill S.R."/>
            <person name="Nelson K.E."/>
            <person name="Read T.D."/>
            <person name="Tettelin H."/>
            <person name="Richardson D.L."/>
            <person name="Ermolaeva M.D."/>
            <person name="Vamathevan J.J."/>
            <person name="Bass S."/>
            <person name="Qin H."/>
            <person name="Dragoi I."/>
            <person name="Sellers P."/>
            <person name="McDonald L.A."/>
            <person name="Utterback T.R."/>
            <person name="Fleischmann R.D."/>
            <person name="Nierman W.C."/>
            <person name="White O."/>
            <person name="Salzberg S.L."/>
            <person name="Smith H.O."/>
            <person name="Colwell R.R."/>
            <person name="Mekalanos J.J."/>
            <person name="Venter J.C."/>
            <person name="Fraser C.M."/>
        </authorList>
    </citation>
    <scope>NUCLEOTIDE SEQUENCE [LARGE SCALE GENOMIC DNA]</scope>
    <source>
        <strain>ATCC 39315 / El Tor Inaba N16961</strain>
    </source>
</reference>
<proteinExistence type="evidence at protein level"/>
<name>SYW_VIBCH</name>
<organism>
    <name type="scientific">Vibrio cholerae serotype O1 (strain ATCC 39315 / El Tor Inaba N16961)</name>
    <dbReference type="NCBI Taxonomy" id="243277"/>
    <lineage>
        <taxon>Bacteria</taxon>
        <taxon>Pseudomonadati</taxon>
        <taxon>Pseudomonadota</taxon>
        <taxon>Gammaproteobacteria</taxon>
        <taxon>Vibrionales</taxon>
        <taxon>Vibrionaceae</taxon>
        <taxon>Vibrio</taxon>
    </lineage>
</organism>
<dbReference type="EC" id="6.1.1.2" evidence="1"/>
<dbReference type="EMBL" id="AE003852">
    <property type="protein sequence ID" value="AAF95764.1"/>
    <property type="status" value="ALT_INIT"/>
    <property type="molecule type" value="Genomic_DNA"/>
</dbReference>
<dbReference type="PIR" id="E82052">
    <property type="entry name" value="E82052"/>
</dbReference>
<dbReference type="RefSeq" id="NP_232251.2">
    <property type="nucleotide sequence ID" value="NC_002505.1"/>
</dbReference>
<dbReference type="RefSeq" id="WP_000042615.1">
    <property type="nucleotide sequence ID" value="NZ_LT906614.1"/>
</dbReference>
<dbReference type="PDB" id="3SZ3">
    <property type="method" value="X-ray"/>
    <property type="resolution" value="1.50 A"/>
    <property type="chains" value="A=1-338"/>
</dbReference>
<dbReference type="PDBsum" id="3SZ3"/>
<dbReference type="SMR" id="Q9KNV7"/>
<dbReference type="STRING" id="243277.VC_2623"/>
<dbReference type="DNASU" id="2615640"/>
<dbReference type="EnsemblBacteria" id="AAF95764">
    <property type="protein sequence ID" value="AAF95764"/>
    <property type="gene ID" value="VC_2623"/>
</dbReference>
<dbReference type="GeneID" id="88785182"/>
<dbReference type="KEGG" id="vch:VC_2623"/>
<dbReference type="PATRIC" id="fig|243277.26.peg.2501"/>
<dbReference type="eggNOG" id="COG0180">
    <property type="taxonomic scope" value="Bacteria"/>
</dbReference>
<dbReference type="HOGENOM" id="CLU_029244_1_1_6"/>
<dbReference type="EvolutionaryTrace" id="Q9KNV7"/>
<dbReference type="Proteomes" id="UP000000584">
    <property type="component" value="Chromosome 1"/>
</dbReference>
<dbReference type="GO" id="GO:0005829">
    <property type="term" value="C:cytosol"/>
    <property type="evidence" value="ECO:0000318"/>
    <property type="project" value="GO_Central"/>
</dbReference>
<dbReference type="GO" id="GO:0005524">
    <property type="term" value="F:ATP binding"/>
    <property type="evidence" value="ECO:0007669"/>
    <property type="project" value="UniProtKB-UniRule"/>
</dbReference>
<dbReference type="GO" id="GO:0004830">
    <property type="term" value="F:tryptophan-tRNA ligase activity"/>
    <property type="evidence" value="ECO:0000318"/>
    <property type="project" value="GO_Central"/>
</dbReference>
<dbReference type="GO" id="GO:0006436">
    <property type="term" value="P:tryptophanyl-tRNA aminoacylation"/>
    <property type="evidence" value="ECO:0000318"/>
    <property type="project" value="GO_Central"/>
</dbReference>
<dbReference type="CDD" id="cd00806">
    <property type="entry name" value="TrpRS_core"/>
    <property type="match status" value="1"/>
</dbReference>
<dbReference type="FunFam" id="1.10.240.10:FF:000002">
    <property type="entry name" value="Tryptophan--tRNA ligase"/>
    <property type="match status" value="1"/>
</dbReference>
<dbReference type="FunFam" id="3.40.50.620:FF:000024">
    <property type="entry name" value="Tryptophan--tRNA ligase"/>
    <property type="match status" value="1"/>
</dbReference>
<dbReference type="Gene3D" id="3.40.50.620">
    <property type="entry name" value="HUPs"/>
    <property type="match status" value="1"/>
</dbReference>
<dbReference type="Gene3D" id="1.10.240.10">
    <property type="entry name" value="Tyrosyl-Transfer RNA Synthetase"/>
    <property type="match status" value="1"/>
</dbReference>
<dbReference type="HAMAP" id="MF_00140_B">
    <property type="entry name" value="Trp_tRNA_synth_B"/>
    <property type="match status" value="1"/>
</dbReference>
<dbReference type="InterPro" id="IPR002305">
    <property type="entry name" value="aa-tRNA-synth_Ic"/>
</dbReference>
<dbReference type="InterPro" id="IPR014729">
    <property type="entry name" value="Rossmann-like_a/b/a_fold"/>
</dbReference>
<dbReference type="InterPro" id="IPR002306">
    <property type="entry name" value="Trp-tRNA-ligase"/>
</dbReference>
<dbReference type="InterPro" id="IPR024109">
    <property type="entry name" value="Trp-tRNA-ligase_bac-type"/>
</dbReference>
<dbReference type="InterPro" id="IPR050203">
    <property type="entry name" value="Trp-tRNA_synthetase"/>
</dbReference>
<dbReference type="NCBIfam" id="TIGR00233">
    <property type="entry name" value="trpS"/>
    <property type="match status" value="1"/>
</dbReference>
<dbReference type="PANTHER" id="PTHR43766">
    <property type="entry name" value="TRYPTOPHAN--TRNA LIGASE, MITOCHONDRIAL"/>
    <property type="match status" value="1"/>
</dbReference>
<dbReference type="PANTHER" id="PTHR43766:SF1">
    <property type="entry name" value="TRYPTOPHAN--TRNA LIGASE, MITOCHONDRIAL"/>
    <property type="match status" value="1"/>
</dbReference>
<dbReference type="Pfam" id="PF00579">
    <property type="entry name" value="tRNA-synt_1b"/>
    <property type="match status" value="1"/>
</dbReference>
<dbReference type="PRINTS" id="PR01039">
    <property type="entry name" value="TRNASYNTHTRP"/>
</dbReference>
<dbReference type="SUPFAM" id="SSF52374">
    <property type="entry name" value="Nucleotidylyl transferase"/>
    <property type="match status" value="1"/>
</dbReference>
<accession>Q9KNV7</accession>
<gene>
    <name evidence="1" type="primary">trpS</name>
    <name type="ordered locus">VC_2623</name>
</gene>
<feature type="chain" id="PRO_0000136705" description="Tryptophan--tRNA ligase">
    <location>
        <begin position="1"/>
        <end position="338"/>
    </location>
</feature>
<feature type="short sequence motif" description="'HIGH' region" evidence="1">
    <location>
        <begin position="12"/>
        <end position="20"/>
    </location>
</feature>
<feature type="short sequence motif" description="'KMSKS' region" evidence="1">
    <location>
        <begin position="198"/>
        <end position="202"/>
    </location>
</feature>
<feature type="binding site" evidence="1">
    <location>
        <begin position="11"/>
        <end position="13"/>
    </location>
    <ligand>
        <name>ATP</name>
        <dbReference type="ChEBI" id="CHEBI:30616"/>
    </ligand>
</feature>
<feature type="binding site" evidence="1">
    <location>
        <begin position="19"/>
        <end position="20"/>
    </location>
    <ligand>
        <name>ATP</name>
        <dbReference type="ChEBI" id="CHEBI:30616"/>
    </ligand>
</feature>
<feature type="binding site" evidence="1">
    <location>
        <position position="135"/>
    </location>
    <ligand>
        <name>L-tryptophan</name>
        <dbReference type="ChEBI" id="CHEBI:57912"/>
    </ligand>
</feature>
<feature type="binding site" evidence="1">
    <location>
        <begin position="147"/>
        <end position="149"/>
    </location>
    <ligand>
        <name>ATP</name>
        <dbReference type="ChEBI" id="CHEBI:30616"/>
    </ligand>
</feature>
<feature type="binding site" evidence="1">
    <location>
        <position position="189"/>
    </location>
    <ligand>
        <name>ATP</name>
        <dbReference type="ChEBI" id="CHEBI:30616"/>
    </ligand>
</feature>
<feature type="binding site" evidence="1">
    <location>
        <begin position="198"/>
        <end position="202"/>
    </location>
    <ligand>
        <name>ATP</name>
        <dbReference type="ChEBI" id="CHEBI:30616"/>
    </ligand>
</feature>
<feature type="strand" evidence="3">
    <location>
        <begin position="5"/>
        <end position="10"/>
    </location>
</feature>
<feature type="strand" evidence="3">
    <location>
        <begin position="12"/>
        <end position="14"/>
    </location>
</feature>
<feature type="helix" evidence="3">
    <location>
        <begin position="18"/>
        <end position="23"/>
    </location>
</feature>
<feature type="helix" evidence="3">
    <location>
        <begin position="25"/>
        <end position="27"/>
    </location>
</feature>
<feature type="helix" evidence="3">
    <location>
        <begin position="28"/>
        <end position="34"/>
    </location>
</feature>
<feature type="strand" evidence="3">
    <location>
        <begin position="35"/>
        <end position="41"/>
    </location>
</feature>
<feature type="helix" evidence="3">
    <location>
        <begin position="43"/>
        <end position="46"/>
    </location>
</feature>
<feature type="helix" evidence="3">
    <location>
        <begin position="53"/>
        <end position="69"/>
    </location>
</feature>
<feature type="turn" evidence="3">
    <location>
        <begin position="74"/>
        <end position="76"/>
    </location>
</feature>
<feature type="strand" evidence="3">
    <location>
        <begin position="77"/>
        <end position="81"/>
    </location>
</feature>
<feature type="helix" evidence="3">
    <location>
        <begin position="82"/>
        <end position="84"/>
    </location>
</feature>
<feature type="helix" evidence="3">
    <location>
        <begin position="87"/>
        <end position="96"/>
    </location>
</feature>
<feature type="helix" evidence="3">
    <location>
        <begin position="101"/>
        <end position="105"/>
    </location>
</feature>
<feature type="helix" evidence="3">
    <location>
        <begin position="108"/>
        <end position="117"/>
    </location>
</feature>
<feature type="helix" evidence="3">
    <location>
        <begin position="118"/>
        <end position="120"/>
    </location>
</feature>
<feature type="helix" evidence="3">
    <location>
        <begin position="123"/>
        <end position="137"/>
    </location>
</feature>
<feature type="turn" evidence="3">
    <location>
        <begin position="138"/>
        <end position="140"/>
    </location>
</feature>
<feature type="strand" evidence="3">
    <location>
        <begin position="142"/>
        <end position="144"/>
    </location>
</feature>
<feature type="helix" evidence="3">
    <location>
        <begin position="148"/>
        <end position="150"/>
    </location>
</feature>
<feature type="helix" evidence="3">
    <location>
        <begin position="151"/>
        <end position="168"/>
    </location>
</feature>
<feature type="strand" evidence="3">
    <location>
        <begin position="170"/>
        <end position="172"/>
    </location>
</feature>
<feature type="strand" evidence="3">
    <location>
        <begin position="194"/>
        <end position="198"/>
    </location>
</feature>
<feature type="helix" evidence="3">
    <location>
        <begin position="206"/>
        <end position="208"/>
    </location>
</feature>
<feature type="helix" evidence="3">
    <location>
        <begin position="216"/>
        <end position="224"/>
    </location>
</feature>
<feature type="turn" evidence="3">
    <location>
        <begin position="240"/>
        <end position="242"/>
    </location>
</feature>
<feature type="helix" evidence="3">
    <location>
        <begin position="244"/>
        <end position="257"/>
    </location>
</feature>
<feature type="helix" evidence="3">
    <location>
        <begin position="261"/>
        <end position="267"/>
    </location>
</feature>
<feature type="turn" evidence="3">
    <location>
        <begin position="268"/>
        <end position="270"/>
    </location>
</feature>
<feature type="helix" evidence="3">
    <location>
        <begin position="275"/>
        <end position="300"/>
    </location>
</feature>
<feature type="helix" evidence="3">
    <location>
        <begin position="303"/>
        <end position="332"/>
    </location>
</feature>
<protein>
    <recommendedName>
        <fullName evidence="1">Tryptophan--tRNA ligase</fullName>
        <ecNumber evidence="1">6.1.1.2</ecNumber>
    </recommendedName>
    <alternativeName>
        <fullName evidence="1">Tryptophanyl-tRNA synthetase</fullName>
        <shortName evidence="1">TrpRS</shortName>
    </alternativeName>
</protein>
<keyword id="KW-0002">3D-structure</keyword>
<keyword id="KW-0030">Aminoacyl-tRNA synthetase</keyword>
<keyword id="KW-0067">ATP-binding</keyword>
<keyword id="KW-0963">Cytoplasm</keyword>
<keyword id="KW-0436">Ligase</keyword>
<keyword id="KW-0547">Nucleotide-binding</keyword>
<keyword id="KW-0648">Protein biosynthesis</keyword>
<keyword id="KW-1185">Reference proteome</keyword>
<comment type="function">
    <text evidence="1">Catalyzes the attachment of tryptophan to tRNA(Trp).</text>
</comment>
<comment type="catalytic activity">
    <reaction evidence="1">
        <text>tRNA(Trp) + L-tryptophan + ATP = L-tryptophyl-tRNA(Trp) + AMP + diphosphate + H(+)</text>
        <dbReference type="Rhea" id="RHEA:24080"/>
        <dbReference type="Rhea" id="RHEA-COMP:9671"/>
        <dbReference type="Rhea" id="RHEA-COMP:9705"/>
        <dbReference type="ChEBI" id="CHEBI:15378"/>
        <dbReference type="ChEBI" id="CHEBI:30616"/>
        <dbReference type="ChEBI" id="CHEBI:33019"/>
        <dbReference type="ChEBI" id="CHEBI:57912"/>
        <dbReference type="ChEBI" id="CHEBI:78442"/>
        <dbReference type="ChEBI" id="CHEBI:78535"/>
        <dbReference type="ChEBI" id="CHEBI:456215"/>
        <dbReference type="EC" id="6.1.1.2"/>
    </reaction>
</comment>
<comment type="subunit">
    <text evidence="1">Homodimer.</text>
</comment>
<comment type="subcellular location">
    <subcellularLocation>
        <location evidence="1">Cytoplasm</location>
    </subcellularLocation>
</comment>
<comment type="similarity">
    <text evidence="1">Belongs to the class-I aminoacyl-tRNA synthetase family.</text>
</comment>
<comment type="sequence caution" evidence="2">
    <conflict type="erroneous initiation">
        <sequence resource="EMBL-CDS" id="AAF95764"/>
    </conflict>
</comment>
<evidence type="ECO:0000255" key="1">
    <source>
        <dbReference type="HAMAP-Rule" id="MF_00140"/>
    </source>
</evidence>
<evidence type="ECO:0000305" key="2"/>
<evidence type="ECO:0007829" key="3">
    <source>
        <dbReference type="PDB" id="3SZ3"/>
    </source>
</evidence>
<sequence length="338" mass="37433">MSKPIVLSGVQPSGELSIGNYLGALRQWQQMQDDYDCQYCVVDLHAITVRQDPQALHEATLDALAICLAVGVDPKKSTLFVQSHVPEHAQLGWVLNCYTQMGELSRMTQFKDKSARYANDVNAGLFGYPVLMAADILLYGAHQVPVGSDQKQHLELARDIATRFNNIYSPEQPIFTIPEPYIPTVNARVMSLQDATKKMSKSDDNRKNVITLLEDPKSIIKKINKAQTDAETPPRIAYDVENKAGIANLMGLYSAATGKTFAEIEAQYAGVEMYGPFKKDVGEAVVAMLEPVQAEYQRIRNDREYLNSVMRDGAEKASAKALQTLKKVYAAVGFVARP</sequence>